<proteinExistence type="inferred from homology"/>
<sequence length="534" mass="60778">MKWVEKYAPKKLGDVLGNAKAKAQIEVWANKWSKGVPQKPLLLMGPPGIGKTTIAHLVGKEYFSETIEVNASDKRSYDIIKSSIGEAAQTRSLFHSGYKLLIMDEVDGISGRDDSGGARAVNETIKNSKQPIILMANDAYSKRLTSIKPKCQGIKFTKVHTNSINAQLKRICAREDIEYDSEALYTLSKESNGDLRSAITSLEAIVDNDKKITKDSLSVIAKKDGEQNIFDTVVAVLKSKNPEHVAEAMRVNTQPPFLIELIAENIPREYERTNEIVKAYEMISLADVNLGRAFRTQNYTYWKYAFLFMGRGVAAAKKQTYKKFSRIITPTIYTKLSKSRKNRNLKEQVTQKMSLKLHTSPKELEKQLVFYEELFKDNEQAYDLKQYFKLTDDEVKLFRSRKIPASVEKKRLTKLRKEQELEEKEIQKQKIIDAKKVELKEESKNKKEIKVKTKKDTVEDSSKTKSTTKSKKTSKSTPTKKVTKTKKSSNSTTKNKTESPKNSSKTSSKTSVDDKKTSKKNNKKKSRQTTLFDF</sequence>
<gene>
    <name evidence="1" type="primary">rfcL</name>
    <name type="ordered locus">Msp_0414</name>
</gene>
<accession>Q2NH88</accession>
<keyword id="KW-0067">ATP-binding</keyword>
<keyword id="KW-0235">DNA replication</keyword>
<keyword id="KW-0547">Nucleotide-binding</keyword>
<keyword id="KW-1185">Reference proteome</keyword>
<protein>
    <recommendedName>
        <fullName evidence="1">Replication factor C large subunit</fullName>
        <shortName evidence="1">RFC large subunit</shortName>
    </recommendedName>
    <alternativeName>
        <fullName evidence="1">Clamp loader large subunit</fullName>
    </alternativeName>
</protein>
<name>RFCL_METST</name>
<organism>
    <name type="scientific">Methanosphaera stadtmanae (strain ATCC 43021 / DSM 3091 / JCM 11832 / MCB-3)</name>
    <dbReference type="NCBI Taxonomy" id="339860"/>
    <lineage>
        <taxon>Archaea</taxon>
        <taxon>Methanobacteriati</taxon>
        <taxon>Methanobacteriota</taxon>
        <taxon>Methanomada group</taxon>
        <taxon>Methanobacteria</taxon>
        <taxon>Methanobacteriales</taxon>
        <taxon>Methanobacteriaceae</taxon>
        <taxon>Methanosphaera</taxon>
    </lineage>
</organism>
<dbReference type="EMBL" id="CP000102">
    <property type="protein sequence ID" value="ABC56815.1"/>
    <property type="molecule type" value="Genomic_DNA"/>
</dbReference>
<dbReference type="RefSeq" id="WP_011406015.1">
    <property type="nucleotide sequence ID" value="NC_007681.1"/>
</dbReference>
<dbReference type="SMR" id="Q2NH88"/>
<dbReference type="STRING" id="339860.Msp_0414"/>
<dbReference type="KEGG" id="mst:Msp_0414"/>
<dbReference type="eggNOG" id="arCOG00470">
    <property type="taxonomic scope" value="Archaea"/>
</dbReference>
<dbReference type="HOGENOM" id="CLU_027255_1_1_2"/>
<dbReference type="OrthoDB" id="8658at2157"/>
<dbReference type="Proteomes" id="UP000001931">
    <property type="component" value="Chromosome"/>
</dbReference>
<dbReference type="GO" id="GO:0005524">
    <property type="term" value="F:ATP binding"/>
    <property type="evidence" value="ECO:0007669"/>
    <property type="project" value="UniProtKB-UniRule"/>
</dbReference>
<dbReference type="GO" id="GO:0016887">
    <property type="term" value="F:ATP hydrolysis activity"/>
    <property type="evidence" value="ECO:0007669"/>
    <property type="project" value="InterPro"/>
</dbReference>
<dbReference type="GO" id="GO:0003689">
    <property type="term" value="F:DNA clamp loader activity"/>
    <property type="evidence" value="ECO:0007669"/>
    <property type="project" value="UniProtKB-UniRule"/>
</dbReference>
<dbReference type="GO" id="GO:0006260">
    <property type="term" value="P:DNA replication"/>
    <property type="evidence" value="ECO:0007669"/>
    <property type="project" value="UniProtKB-UniRule"/>
</dbReference>
<dbReference type="CDD" id="cd00009">
    <property type="entry name" value="AAA"/>
    <property type="match status" value="1"/>
</dbReference>
<dbReference type="CDD" id="cd18140">
    <property type="entry name" value="HLD_clamp_RFC"/>
    <property type="match status" value="1"/>
</dbReference>
<dbReference type="Gene3D" id="1.10.8.60">
    <property type="match status" value="1"/>
</dbReference>
<dbReference type="Gene3D" id="3.40.50.300">
    <property type="entry name" value="P-loop containing nucleotide triphosphate hydrolases"/>
    <property type="match status" value="1"/>
</dbReference>
<dbReference type="HAMAP" id="MF_01508">
    <property type="entry name" value="RfcL"/>
    <property type="match status" value="1"/>
</dbReference>
<dbReference type="InterPro" id="IPR003593">
    <property type="entry name" value="AAA+_ATPase"/>
</dbReference>
<dbReference type="InterPro" id="IPR003959">
    <property type="entry name" value="ATPase_AAA_core"/>
</dbReference>
<dbReference type="InterPro" id="IPR027417">
    <property type="entry name" value="P-loop_NTPase"/>
</dbReference>
<dbReference type="InterPro" id="IPR023935">
    <property type="entry name" value="Rep_factor-C_lsu"/>
</dbReference>
<dbReference type="InterPro" id="IPR047854">
    <property type="entry name" value="RFC_lid"/>
</dbReference>
<dbReference type="NCBIfam" id="NF003229">
    <property type="entry name" value="PRK04195.1-5"/>
    <property type="match status" value="1"/>
</dbReference>
<dbReference type="NCBIfam" id="NF003233">
    <property type="entry name" value="PRK04195.2-3"/>
    <property type="match status" value="1"/>
</dbReference>
<dbReference type="PANTHER" id="PTHR23389">
    <property type="entry name" value="CHROMOSOME TRANSMISSION FIDELITY FACTOR 18"/>
    <property type="match status" value="1"/>
</dbReference>
<dbReference type="PANTHER" id="PTHR23389:SF6">
    <property type="entry name" value="REPLICATION FACTOR C SUBUNIT 1"/>
    <property type="match status" value="1"/>
</dbReference>
<dbReference type="Pfam" id="PF00004">
    <property type="entry name" value="AAA"/>
    <property type="match status" value="1"/>
</dbReference>
<dbReference type="Pfam" id="PF21960">
    <property type="entry name" value="RCF1-5-like_lid"/>
    <property type="match status" value="1"/>
</dbReference>
<dbReference type="SMART" id="SM00382">
    <property type="entry name" value="AAA"/>
    <property type="match status" value="1"/>
</dbReference>
<dbReference type="SUPFAM" id="SSF52540">
    <property type="entry name" value="P-loop containing nucleoside triphosphate hydrolases"/>
    <property type="match status" value="1"/>
</dbReference>
<reference key="1">
    <citation type="journal article" date="2006" name="J. Bacteriol.">
        <title>The genome sequence of Methanosphaera stadtmanae reveals why this human intestinal archaeon is restricted to methanol and H2 for methane formation and ATP synthesis.</title>
        <authorList>
            <person name="Fricke W.F."/>
            <person name="Seedorf H."/>
            <person name="Henne A."/>
            <person name="Kruer M."/>
            <person name="Liesegang H."/>
            <person name="Hedderich R."/>
            <person name="Gottschalk G."/>
            <person name="Thauer R.K."/>
        </authorList>
    </citation>
    <scope>NUCLEOTIDE SEQUENCE [LARGE SCALE GENOMIC DNA]</scope>
    <source>
        <strain>ATCC 43021 / DSM 3091 / JCM 11832 / MCB-3</strain>
    </source>
</reference>
<comment type="function">
    <text evidence="1">Part of the RFC clamp loader complex which loads the PCNA sliding clamp onto DNA.</text>
</comment>
<comment type="subunit">
    <text evidence="1">Heteromultimer composed of small subunits (RfcS) and large subunits (RfcL).</text>
</comment>
<comment type="similarity">
    <text evidence="1">Belongs to the activator 1 small subunits family. RfcL subfamily.</text>
</comment>
<evidence type="ECO:0000255" key="1">
    <source>
        <dbReference type="HAMAP-Rule" id="MF_01508"/>
    </source>
</evidence>
<evidence type="ECO:0000256" key="2">
    <source>
        <dbReference type="SAM" id="MobiDB-lite"/>
    </source>
</evidence>
<feature type="chain" id="PRO_0000245637" description="Replication factor C large subunit">
    <location>
        <begin position="1"/>
        <end position="534"/>
    </location>
</feature>
<feature type="region of interest" description="Disordered" evidence="2">
    <location>
        <begin position="444"/>
        <end position="534"/>
    </location>
</feature>
<feature type="compositionally biased region" description="Basic and acidic residues" evidence="2">
    <location>
        <begin position="444"/>
        <end position="463"/>
    </location>
</feature>
<feature type="compositionally biased region" description="Low complexity" evidence="2">
    <location>
        <begin position="488"/>
        <end position="510"/>
    </location>
</feature>
<feature type="compositionally biased region" description="Basic residues" evidence="2">
    <location>
        <begin position="517"/>
        <end position="527"/>
    </location>
</feature>
<feature type="binding site" evidence="1">
    <location>
        <begin position="45"/>
        <end position="52"/>
    </location>
    <ligand>
        <name>ATP</name>
        <dbReference type="ChEBI" id="CHEBI:30616"/>
    </ligand>
</feature>